<comment type="function">
    <text evidence="1">Functions in the biosynthesis of branched-chain amino acids. Catalyzes the dehydration of (2R,3R)-2,3-dihydroxy-3-methylpentanoate (2,3-dihydroxy-3-methylvalerate) into 2-oxo-3-methylpentanoate (2-oxo-3-methylvalerate) and of (2R)-2,3-dihydroxy-3-methylbutanoate (2,3-dihydroxyisovalerate) into 2-oxo-3-methylbutanoate (2-oxoisovalerate), the penultimate precursor to L-isoleucine and L-valine, respectively.</text>
</comment>
<comment type="catalytic activity">
    <reaction evidence="1">
        <text>(2R)-2,3-dihydroxy-3-methylbutanoate = 3-methyl-2-oxobutanoate + H2O</text>
        <dbReference type="Rhea" id="RHEA:24809"/>
        <dbReference type="ChEBI" id="CHEBI:11851"/>
        <dbReference type="ChEBI" id="CHEBI:15377"/>
        <dbReference type="ChEBI" id="CHEBI:49072"/>
        <dbReference type="EC" id="4.2.1.9"/>
    </reaction>
    <physiologicalReaction direction="left-to-right" evidence="1">
        <dbReference type="Rhea" id="RHEA:24810"/>
    </physiologicalReaction>
</comment>
<comment type="catalytic activity">
    <reaction evidence="1">
        <text>(2R,3R)-2,3-dihydroxy-3-methylpentanoate = (S)-3-methyl-2-oxopentanoate + H2O</text>
        <dbReference type="Rhea" id="RHEA:27694"/>
        <dbReference type="ChEBI" id="CHEBI:15377"/>
        <dbReference type="ChEBI" id="CHEBI:35146"/>
        <dbReference type="ChEBI" id="CHEBI:49258"/>
        <dbReference type="EC" id="4.2.1.9"/>
    </reaction>
    <physiologicalReaction direction="left-to-right" evidence="1">
        <dbReference type="Rhea" id="RHEA:27695"/>
    </physiologicalReaction>
</comment>
<comment type="cofactor">
    <cofactor evidence="1">
        <name>[2Fe-2S] cluster</name>
        <dbReference type="ChEBI" id="CHEBI:190135"/>
    </cofactor>
    <text evidence="1">Binds 1 [2Fe-2S] cluster per subunit. This cluster acts as a Lewis acid cofactor.</text>
</comment>
<comment type="cofactor">
    <cofactor evidence="1">
        <name>Mg(2+)</name>
        <dbReference type="ChEBI" id="CHEBI:18420"/>
    </cofactor>
</comment>
<comment type="pathway">
    <text evidence="1">Amino-acid biosynthesis; L-isoleucine biosynthesis; L-isoleucine from 2-oxobutanoate: step 3/4.</text>
</comment>
<comment type="pathway">
    <text evidence="1">Amino-acid biosynthesis; L-valine biosynthesis; L-valine from pyruvate: step 3/4.</text>
</comment>
<comment type="subunit">
    <text evidence="1">Homodimer.</text>
</comment>
<comment type="similarity">
    <text evidence="1">Belongs to the IlvD/Edd family.</text>
</comment>
<dbReference type="EC" id="4.2.1.9" evidence="1"/>
<dbReference type="EMBL" id="AE000657">
    <property type="protein sequence ID" value="AAC06971.1"/>
    <property type="molecule type" value="Genomic_DNA"/>
</dbReference>
<dbReference type="PIR" id="F70372">
    <property type="entry name" value="F70372"/>
</dbReference>
<dbReference type="RefSeq" id="NP_213570.1">
    <property type="nucleotide sequence ID" value="NC_000918.1"/>
</dbReference>
<dbReference type="RefSeq" id="WP_010880508.1">
    <property type="nucleotide sequence ID" value="NC_000918.1"/>
</dbReference>
<dbReference type="SMR" id="O67009"/>
<dbReference type="FunCoup" id="O67009">
    <property type="interactions" value="420"/>
</dbReference>
<dbReference type="STRING" id="224324.aq_837"/>
<dbReference type="EnsemblBacteria" id="AAC06971">
    <property type="protein sequence ID" value="AAC06971"/>
    <property type="gene ID" value="aq_837"/>
</dbReference>
<dbReference type="KEGG" id="aae:aq_837"/>
<dbReference type="PATRIC" id="fig|224324.8.peg.655"/>
<dbReference type="eggNOG" id="COG0129">
    <property type="taxonomic scope" value="Bacteria"/>
</dbReference>
<dbReference type="HOGENOM" id="CLU_014271_4_2_0"/>
<dbReference type="InParanoid" id="O67009"/>
<dbReference type="OrthoDB" id="9807077at2"/>
<dbReference type="UniPathway" id="UPA00047">
    <property type="reaction ID" value="UER00057"/>
</dbReference>
<dbReference type="UniPathway" id="UPA00049">
    <property type="reaction ID" value="UER00061"/>
</dbReference>
<dbReference type="Proteomes" id="UP000000798">
    <property type="component" value="Chromosome"/>
</dbReference>
<dbReference type="GO" id="GO:0005829">
    <property type="term" value="C:cytosol"/>
    <property type="evidence" value="ECO:0000318"/>
    <property type="project" value="GO_Central"/>
</dbReference>
<dbReference type="GO" id="GO:0051537">
    <property type="term" value="F:2 iron, 2 sulfur cluster binding"/>
    <property type="evidence" value="ECO:0007669"/>
    <property type="project" value="UniProtKB-UniRule"/>
</dbReference>
<dbReference type="GO" id="GO:0004160">
    <property type="term" value="F:dihydroxy-acid dehydratase activity"/>
    <property type="evidence" value="ECO:0007669"/>
    <property type="project" value="UniProtKB-UniRule"/>
</dbReference>
<dbReference type="GO" id="GO:0016836">
    <property type="term" value="F:hydro-lyase activity"/>
    <property type="evidence" value="ECO:0000318"/>
    <property type="project" value="GO_Central"/>
</dbReference>
<dbReference type="GO" id="GO:0000287">
    <property type="term" value="F:magnesium ion binding"/>
    <property type="evidence" value="ECO:0007669"/>
    <property type="project" value="UniProtKB-UniRule"/>
</dbReference>
<dbReference type="GO" id="GO:0009097">
    <property type="term" value="P:isoleucine biosynthetic process"/>
    <property type="evidence" value="ECO:0007669"/>
    <property type="project" value="UniProtKB-UniRule"/>
</dbReference>
<dbReference type="GO" id="GO:0009099">
    <property type="term" value="P:L-valine biosynthetic process"/>
    <property type="evidence" value="ECO:0007669"/>
    <property type="project" value="UniProtKB-UniRule"/>
</dbReference>
<dbReference type="FunFam" id="3.50.30.80:FF:000001">
    <property type="entry name" value="Dihydroxy-acid dehydratase"/>
    <property type="match status" value="1"/>
</dbReference>
<dbReference type="Gene3D" id="3.50.30.80">
    <property type="entry name" value="IlvD/EDD C-terminal domain-like"/>
    <property type="match status" value="1"/>
</dbReference>
<dbReference type="HAMAP" id="MF_00012">
    <property type="entry name" value="IlvD"/>
    <property type="match status" value="1"/>
</dbReference>
<dbReference type="InterPro" id="IPR042096">
    <property type="entry name" value="Dihydro-acid_dehy_C"/>
</dbReference>
<dbReference type="InterPro" id="IPR004404">
    <property type="entry name" value="DihydroxyA_deHydtase"/>
</dbReference>
<dbReference type="InterPro" id="IPR020558">
    <property type="entry name" value="DiOHA_6PGluconate_deHydtase_CS"/>
</dbReference>
<dbReference type="InterPro" id="IPR056740">
    <property type="entry name" value="ILV_EDD_C"/>
</dbReference>
<dbReference type="InterPro" id="IPR000581">
    <property type="entry name" value="ILV_EDD_N"/>
</dbReference>
<dbReference type="InterPro" id="IPR037237">
    <property type="entry name" value="IlvD/EDD_N"/>
</dbReference>
<dbReference type="NCBIfam" id="TIGR00110">
    <property type="entry name" value="ilvD"/>
    <property type="match status" value="1"/>
</dbReference>
<dbReference type="NCBIfam" id="NF002068">
    <property type="entry name" value="PRK00911.1"/>
    <property type="match status" value="1"/>
</dbReference>
<dbReference type="PANTHER" id="PTHR43661">
    <property type="entry name" value="D-XYLONATE DEHYDRATASE"/>
    <property type="match status" value="1"/>
</dbReference>
<dbReference type="PANTHER" id="PTHR43661:SF3">
    <property type="entry name" value="D-XYLONATE DEHYDRATASE YAGF-RELATED"/>
    <property type="match status" value="1"/>
</dbReference>
<dbReference type="Pfam" id="PF24877">
    <property type="entry name" value="ILV_EDD_C"/>
    <property type="match status" value="1"/>
</dbReference>
<dbReference type="Pfam" id="PF00920">
    <property type="entry name" value="ILVD_EDD_N"/>
    <property type="match status" value="1"/>
</dbReference>
<dbReference type="SUPFAM" id="SSF143975">
    <property type="entry name" value="IlvD/EDD N-terminal domain-like"/>
    <property type="match status" value="1"/>
</dbReference>
<dbReference type="SUPFAM" id="SSF52016">
    <property type="entry name" value="LeuD/IlvD-like"/>
    <property type="match status" value="1"/>
</dbReference>
<dbReference type="PROSITE" id="PS00886">
    <property type="entry name" value="ILVD_EDD_1"/>
    <property type="match status" value="1"/>
</dbReference>
<dbReference type="PROSITE" id="PS00887">
    <property type="entry name" value="ILVD_EDD_2"/>
    <property type="match status" value="1"/>
</dbReference>
<organism>
    <name type="scientific">Aquifex aeolicus (strain VF5)</name>
    <dbReference type="NCBI Taxonomy" id="224324"/>
    <lineage>
        <taxon>Bacteria</taxon>
        <taxon>Pseudomonadati</taxon>
        <taxon>Aquificota</taxon>
        <taxon>Aquificia</taxon>
        <taxon>Aquificales</taxon>
        <taxon>Aquificaceae</taxon>
        <taxon>Aquifex</taxon>
    </lineage>
</organism>
<name>ILVD_AQUAE</name>
<evidence type="ECO:0000255" key="1">
    <source>
        <dbReference type="HAMAP-Rule" id="MF_00012"/>
    </source>
</evidence>
<feature type="chain" id="PRO_0000103426" description="Dihydroxy-acid dehydratase">
    <location>
        <begin position="1"/>
        <end position="555"/>
    </location>
</feature>
<feature type="active site" description="Proton acceptor" evidence="1">
    <location>
        <position position="470"/>
    </location>
</feature>
<feature type="binding site" evidence="1">
    <location>
        <position position="80"/>
    </location>
    <ligand>
        <name>Mg(2+)</name>
        <dbReference type="ChEBI" id="CHEBI:18420"/>
    </ligand>
</feature>
<feature type="binding site" evidence="1">
    <location>
        <position position="121"/>
    </location>
    <ligand>
        <name>[2Fe-2S] cluster</name>
        <dbReference type="ChEBI" id="CHEBI:190135"/>
    </ligand>
</feature>
<feature type="binding site" evidence="1">
    <location>
        <position position="122"/>
    </location>
    <ligand>
        <name>Mg(2+)</name>
        <dbReference type="ChEBI" id="CHEBI:18420"/>
    </ligand>
</feature>
<feature type="binding site" description="via carbamate group" evidence="1">
    <location>
        <position position="123"/>
    </location>
    <ligand>
        <name>Mg(2+)</name>
        <dbReference type="ChEBI" id="CHEBI:18420"/>
    </ligand>
</feature>
<feature type="binding site" evidence="1">
    <location>
        <position position="193"/>
    </location>
    <ligand>
        <name>[2Fe-2S] cluster</name>
        <dbReference type="ChEBI" id="CHEBI:190135"/>
    </ligand>
</feature>
<feature type="binding site" evidence="1">
    <location>
        <position position="444"/>
    </location>
    <ligand>
        <name>Mg(2+)</name>
        <dbReference type="ChEBI" id="CHEBI:18420"/>
    </ligand>
</feature>
<feature type="modified residue" description="N6-carboxylysine" evidence="1">
    <location>
        <position position="123"/>
    </location>
</feature>
<sequence length="555" mass="59547">MKFRSDKVKKGIERAPHRALLRACGLSDEDFDKPLIGIANSYIDIIPGHVHLREFVEPIKEEVRKLGGVPIEFNVIGVDDGIAMGHEGMHYSLPSRELIADSIETVVNAHQLDALICIPNCDKIVPGMLMGALRVNVPTVFISGGPMLAGEVNGQKVDLISVFEGIGKVKRGEISEQELKVIEASACPTCGSCSGMFTANSMNCLTEVLGLALPGNGTILAIDPRREILARNAVKALFELLEKDVKPRDIVTEEALDDAFTVDIAMGGSSNTILHLLAIAREAGIEYNLAKINEISKRTPTICKISPASHYHIEDLDRVGGIPTIMKELSKLGLLHTERKTVSGKTIGEIISDAPDADGEVVRTIENPYSKDGGIAILFGNLAPEGAVVKTAGVDPKMLTFKGKAICFDSEEEAIEGILGGKVKPGHVVVIRYEGPKGGPGMREMLSPTSAIMGMGLGDKVALITDGRFSGGTRGACVGHISPEAAAGGPIGIVKDGDEILIDIPNRRIELLISEEEFNERMKNFKPKQKEIKSSWLRRYAKLVTSASKGAILEA</sequence>
<protein>
    <recommendedName>
        <fullName evidence="1">Dihydroxy-acid dehydratase</fullName>
        <shortName evidence="1">DAD</shortName>
        <ecNumber evidence="1">4.2.1.9</ecNumber>
    </recommendedName>
</protein>
<keyword id="KW-0001">2Fe-2S</keyword>
<keyword id="KW-0028">Amino-acid biosynthesis</keyword>
<keyword id="KW-0100">Branched-chain amino acid biosynthesis</keyword>
<keyword id="KW-0408">Iron</keyword>
<keyword id="KW-0411">Iron-sulfur</keyword>
<keyword id="KW-0456">Lyase</keyword>
<keyword id="KW-0460">Magnesium</keyword>
<keyword id="KW-0479">Metal-binding</keyword>
<keyword id="KW-1185">Reference proteome</keyword>
<proteinExistence type="inferred from homology"/>
<reference key="1">
    <citation type="journal article" date="1998" name="Nature">
        <title>The complete genome of the hyperthermophilic bacterium Aquifex aeolicus.</title>
        <authorList>
            <person name="Deckert G."/>
            <person name="Warren P.V."/>
            <person name="Gaasterland T."/>
            <person name="Young W.G."/>
            <person name="Lenox A.L."/>
            <person name="Graham D.E."/>
            <person name="Overbeek R."/>
            <person name="Snead M.A."/>
            <person name="Keller M."/>
            <person name="Aujay M."/>
            <person name="Huber R."/>
            <person name="Feldman R.A."/>
            <person name="Short J.M."/>
            <person name="Olsen G.J."/>
            <person name="Swanson R.V."/>
        </authorList>
    </citation>
    <scope>NUCLEOTIDE SEQUENCE [LARGE SCALE GENOMIC DNA]</scope>
    <source>
        <strain>VF5</strain>
    </source>
</reference>
<accession>O67009</accession>
<gene>
    <name evidence="1" type="primary">ilvD</name>
    <name type="ordered locus">aq_837</name>
</gene>